<evidence type="ECO:0000255" key="1">
    <source>
        <dbReference type="HAMAP-Rule" id="MF_00165"/>
    </source>
</evidence>
<sequence length="212" mass="24026">MTGTFITVEGPDGAGKTTQLQLLADRLTAEGYEIVMTREPGGTRIGNEIRSLILNPDFQEMDEMTEILLYAASRAQHVNELIRPALAAGKIVLCDRFIDASIAYQGYGLGYTIEQVRSINQQATNHLTPDRTYLFDLTVSESKQRMMDRGALDRIEQRDDAFRQRVYDGFMTLAVQEPERIQLVDANQSIESLQTELCKDVLTYLKKRERLS</sequence>
<keyword id="KW-0067">ATP-binding</keyword>
<keyword id="KW-0418">Kinase</keyword>
<keyword id="KW-0545">Nucleotide biosynthesis</keyword>
<keyword id="KW-0547">Nucleotide-binding</keyword>
<keyword id="KW-1185">Reference proteome</keyword>
<keyword id="KW-0808">Transferase</keyword>
<accession>B1YGD3</accession>
<reference key="1">
    <citation type="submission" date="2008-04" db="EMBL/GenBank/DDBJ databases">
        <title>Complete sequence of chromosome of Exiguobacterium sibiricum 255-15.</title>
        <authorList>
            <consortium name="US DOE Joint Genome Institute"/>
            <person name="Copeland A."/>
            <person name="Lucas S."/>
            <person name="Lapidus A."/>
            <person name="Glavina del Rio T."/>
            <person name="Dalin E."/>
            <person name="Tice H."/>
            <person name="Bruce D."/>
            <person name="Goodwin L."/>
            <person name="Pitluck S."/>
            <person name="Kiss H."/>
            <person name="Chertkov O."/>
            <person name="Monk C."/>
            <person name="Brettin T."/>
            <person name="Detter J.C."/>
            <person name="Han C."/>
            <person name="Kuske C.R."/>
            <person name="Schmutz J."/>
            <person name="Larimer F."/>
            <person name="Land M."/>
            <person name="Hauser L."/>
            <person name="Kyrpides N."/>
            <person name="Mikhailova N."/>
            <person name="Vishnivetskaya T."/>
            <person name="Rodrigues D.F."/>
            <person name="Gilichinsky D."/>
            <person name="Tiedje J."/>
            <person name="Richardson P."/>
        </authorList>
    </citation>
    <scope>NUCLEOTIDE SEQUENCE [LARGE SCALE GENOMIC DNA]</scope>
    <source>
        <strain>DSM 17290 / CCUG 55495 / CIP 109462 / JCM 13490 / 255-15</strain>
    </source>
</reference>
<protein>
    <recommendedName>
        <fullName evidence="1">Thymidylate kinase</fullName>
        <ecNumber evidence="1">2.7.4.9</ecNumber>
    </recommendedName>
    <alternativeName>
        <fullName evidence="1">dTMP kinase</fullName>
    </alternativeName>
</protein>
<gene>
    <name evidence="1" type="primary">tmk</name>
    <name type="ordered locus">Exig_0023</name>
</gene>
<proteinExistence type="inferred from homology"/>
<organism>
    <name type="scientific">Exiguobacterium sibiricum (strain DSM 17290 / CCUG 55495 / CIP 109462 / JCM 13490 / 255-15)</name>
    <dbReference type="NCBI Taxonomy" id="262543"/>
    <lineage>
        <taxon>Bacteria</taxon>
        <taxon>Bacillati</taxon>
        <taxon>Bacillota</taxon>
        <taxon>Bacilli</taxon>
        <taxon>Bacillales</taxon>
        <taxon>Bacillales Family XII. Incertae Sedis</taxon>
        <taxon>Exiguobacterium</taxon>
    </lineage>
</organism>
<name>KTHY_EXIS2</name>
<comment type="function">
    <text evidence="1">Phosphorylation of dTMP to form dTDP in both de novo and salvage pathways of dTTP synthesis.</text>
</comment>
<comment type="catalytic activity">
    <reaction evidence="1">
        <text>dTMP + ATP = dTDP + ADP</text>
        <dbReference type="Rhea" id="RHEA:13517"/>
        <dbReference type="ChEBI" id="CHEBI:30616"/>
        <dbReference type="ChEBI" id="CHEBI:58369"/>
        <dbReference type="ChEBI" id="CHEBI:63528"/>
        <dbReference type="ChEBI" id="CHEBI:456216"/>
        <dbReference type="EC" id="2.7.4.9"/>
    </reaction>
</comment>
<comment type="similarity">
    <text evidence="1">Belongs to the thymidylate kinase family.</text>
</comment>
<dbReference type="EC" id="2.7.4.9" evidence="1"/>
<dbReference type="EMBL" id="CP001022">
    <property type="protein sequence ID" value="ACB59510.1"/>
    <property type="molecule type" value="Genomic_DNA"/>
</dbReference>
<dbReference type="RefSeq" id="WP_012368936.1">
    <property type="nucleotide sequence ID" value="NC_010556.1"/>
</dbReference>
<dbReference type="SMR" id="B1YGD3"/>
<dbReference type="STRING" id="262543.Exig_0023"/>
<dbReference type="KEGG" id="esi:Exig_0023"/>
<dbReference type="eggNOG" id="COG0125">
    <property type="taxonomic scope" value="Bacteria"/>
</dbReference>
<dbReference type="HOGENOM" id="CLU_049131_0_2_9"/>
<dbReference type="OrthoDB" id="9774907at2"/>
<dbReference type="Proteomes" id="UP000001681">
    <property type="component" value="Chromosome"/>
</dbReference>
<dbReference type="GO" id="GO:0005829">
    <property type="term" value="C:cytosol"/>
    <property type="evidence" value="ECO:0007669"/>
    <property type="project" value="TreeGrafter"/>
</dbReference>
<dbReference type="GO" id="GO:0005524">
    <property type="term" value="F:ATP binding"/>
    <property type="evidence" value="ECO:0007669"/>
    <property type="project" value="UniProtKB-UniRule"/>
</dbReference>
<dbReference type="GO" id="GO:0004798">
    <property type="term" value="F:dTMP kinase activity"/>
    <property type="evidence" value="ECO:0007669"/>
    <property type="project" value="UniProtKB-UniRule"/>
</dbReference>
<dbReference type="GO" id="GO:0006233">
    <property type="term" value="P:dTDP biosynthetic process"/>
    <property type="evidence" value="ECO:0007669"/>
    <property type="project" value="InterPro"/>
</dbReference>
<dbReference type="GO" id="GO:0006235">
    <property type="term" value="P:dTTP biosynthetic process"/>
    <property type="evidence" value="ECO:0007669"/>
    <property type="project" value="UniProtKB-UniRule"/>
</dbReference>
<dbReference type="GO" id="GO:0006227">
    <property type="term" value="P:dUDP biosynthetic process"/>
    <property type="evidence" value="ECO:0007669"/>
    <property type="project" value="TreeGrafter"/>
</dbReference>
<dbReference type="CDD" id="cd01672">
    <property type="entry name" value="TMPK"/>
    <property type="match status" value="1"/>
</dbReference>
<dbReference type="FunFam" id="3.40.50.300:FF:000225">
    <property type="entry name" value="Thymidylate kinase"/>
    <property type="match status" value="1"/>
</dbReference>
<dbReference type="Gene3D" id="3.40.50.300">
    <property type="entry name" value="P-loop containing nucleotide triphosphate hydrolases"/>
    <property type="match status" value="1"/>
</dbReference>
<dbReference type="HAMAP" id="MF_00165">
    <property type="entry name" value="Thymidylate_kinase"/>
    <property type="match status" value="1"/>
</dbReference>
<dbReference type="InterPro" id="IPR027417">
    <property type="entry name" value="P-loop_NTPase"/>
</dbReference>
<dbReference type="InterPro" id="IPR039430">
    <property type="entry name" value="Thymidylate_kin-like_dom"/>
</dbReference>
<dbReference type="InterPro" id="IPR018094">
    <property type="entry name" value="Thymidylate_kinase"/>
</dbReference>
<dbReference type="NCBIfam" id="TIGR00041">
    <property type="entry name" value="DTMP_kinase"/>
    <property type="match status" value="1"/>
</dbReference>
<dbReference type="PANTHER" id="PTHR10344">
    <property type="entry name" value="THYMIDYLATE KINASE"/>
    <property type="match status" value="1"/>
</dbReference>
<dbReference type="PANTHER" id="PTHR10344:SF4">
    <property type="entry name" value="UMP-CMP KINASE 2, MITOCHONDRIAL"/>
    <property type="match status" value="1"/>
</dbReference>
<dbReference type="Pfam" id="PF02223">
    <property type="entry name" value="Thymidylate_kin"/>
    <property type="match status" value="1"/>
</dbReference>
<dbReference type="SUPFAM" id="SSF52540">
    <property type="entry name" value="P-loop containing nucleoside triphosphate hydrolases"/>
    <property type="match status" value="1"/>
</dbReference>
<feature type="chain" id="PRO_1000097394" description="Thymidylate kinase">
    <location>
        <begin position="1"/>
        <end position="212"/>
    </location>
</feature>
<feature type="binding site" evidence="1">
    <location>
        <begin position="10"/>
        <end position="17"/>
    </location>
    <ligand>
        <name>ATP</name>
        <dbReference type="ChEBI" id="CHEBI:30616"/>
    </ligand>
</feature>